<name>PVK2_SUPDI</name>
<comment type="function">
    <text evidence="4">Mediates visceral muscle contractile activity (myotropic activity).</text>
</comment>
<comment type="subcellular location">
    <subcellularLocation>
        <location evidence="4">Secreted</location>
    </subcellularLocation>
</comment>
<comment type="similarity">
    <text evidence="1">Belongs to the periviscerokinin family.</text>
</comment>
<keyword id="KW-0027">Amidation</keyword>
<keyword id="KW-0903">Direct protein sequencing</keyword>
<keyword id="KW-0527">Neuropeptide</keyword>
<keyword id="KW-0964">Secreted</keyword>
<accession>P85775</accession>
<dbReference type="GO" id="GO:0005576">
    <property type="term" value="C:extracellular region"/>
    <property type="evidence" value="ECO:0007669"/>
    <property type="project" value="UniProtKB-SubCell"/>
</dbReference>
<dbReference type="GO" id="GO:0007218">
    <property type="term" value="P:neuropeptide signaling pathway"/>
    <property type="evidence" value="ECO:0007669"/>
    <property type="project" value="UniProtKB-KW"/>
</dbReference>
<dbReference type="InterPro" id="IPR013231">
    <property type="entry name" value="Periviscerokinin"/>
</dbReference>
<dbReference type="Pfam" id="PF08259">
    <property type="entry name" value="Periviscerokin"/>
    <property type="match status" value="1"/>
</dbReference>
<organism>
    <name type="scientific">Supella dimidiata</name>
    <name type="common">Cockroach</name>
    <dbReference type="NCBI Taxonomy" id="521517"/>
    <lineage>
        <taxon>Eukaryota</taxon>
        <taxon>Metazoa</taxon>
        <taxon>Ecdysozoa</taxon>
        <taxon>Arthropoda</taxon>
        <taxon>Hexapoda</taxon>
        <taxon>Insecta</taxon>
        <taxon>Pterygota</taxon>
        <taxon>Neoptera</taxon>
        <taxon>Polyneoptera</taxon>
        <taxon>Dictyoptera</taxon>
        <taxon>Blattodea</taxon>
        <taxon>Blaberoidea</taxon>
        <taxon>Ectobiidae</taxon>
        <taxon>Plectopterinae</taxon>
        <taxon>Supella</taxon>
    </lineage>
</organism>
<sequence>GSSGLISMPRV</sequence>
<feature type="peptide" id="PRO_0000378812" description="Periviscerokinin-2" evidence="2">
    <location>
        <begin position="1"/>
        <end position="11"/>
    </location>
</feature>
<feature type="modified residue" description="Valine amide" evidence="2">
    <location>
        <position position="11"/>
    </location>
</feature>
<evidence type="ECO:0000255" key="1"/>
<evidence type="ECO:0000269" key="2">
    <source>
    </source>
</evidence>
<evidence type="ECO:0000303" key="3">
    <source>
    </source>
</evidence>
<evidence type="ECO:0000305" key="4"/>
<protein>
    <recommendedName>
        <fullName evidence="3">Periviscerokinin-2</fullName>
        <shortName evidence="3">SupDi-PVK-2</shortName>
    </recommendedName>
</protein>
<proteinExistence type="evidence at protein level"/>
<reference evidence="4" key="1">
    <citation type="journal article" date="2009" name="BMC Evol. Biol.">
        <title>A proteomic approach for studying insect phylogeny: CAPA peptides of ancient insect taxa (Dictyoptera, Blattoptera) as a test case.</title>
        <authorList>
            <person name="Roth S."/>
            <person name="Fromm B."/>
            <person name="Gaede G."/>
            <person name="Predel R."/>
        </authorList>
    </citation>
    <scope>PROTEIN SEQUENCE</scope>
    <scope>AMIDATION AT VAL-11</scope>
    <source>
        <tissue evidence="2">Abdominal perisympathetic organs</tissue>
    </source>
</reference>